<evidence type="ECO:0000255" key="1">
    <source>
        <dbReference type="HAMAP-Rule" id="MF_01547"/>
    </source>
</evidence>
<organism>
    <name type="scientific">Escherichia coli O139:H28 (strain E24377A / ETEC)</name>
    <dbReference type="NCBI Taxonomy" id="331111"/>
    <lineage>
        <taxon>Bacteria</taxon>
        <taxon>Pseudomonadati</taxon>
        <taxon>Pseudomonadota</taxon>
        <taxon>Gammaproteobacteria</taxon>
        <taxon>Enterobacterales</taxon>
        <taxon>Enterobacteriaceae</taxon>
        <taxon>Escherichia</taxon>
    </lineage>
</organism>
<reference key="1">
    <citation type="journal article" date="2008" name="J. Bacteriol.">
        <title>The pangenome structure of Escherichia coli: comparative genomic analysis of E. coli commensal and pathogenic isolates.</title>
        <authorList>
            <person name="Rasko D.A."/>
            <person name="Rosovitz M.J."/>
            <person name="Myers G.S.A."/>
            <person name="Mongodin E.F."/>
            <person name="Fricke W.F."/>
            <person name="Gajer P."/>
            <person name="Crabtree J."/>
            <person name="Sebaihia M."/>
            <person name="Thomson N.R."/>
            <person name="Chaudhuri R."/>
            <person name="Henderson I.R."/>
            <person name="Sperandio V."/>
            <person name="Ravel J."/>
        </authorList>
    </citation>
    <scope>NUCLEOTIDE SEQUENCE [LARGE SCALE GENOMIC DNA]</scope>
    <source>
        <strain>E24377A / ETEC</strain>
    </source>
</reference>
<dbReference type="EC" id="2.1.1.166" evidence="1"/>
<dbReference type="EMBL" id="CP000800">
    <property type="protein sequence ID" value="ABV19930.1"/>
    <property type="molecule type" value="Genomic_DNA"/>
</dbReference>
<dbReference type="RefSeq" id="WP_000145975.1">
    <property type="nucleotide sequence ID" value="NC_009801.1"/>
</dbReference>
<dbReference type="SMR" id="A7ZS75"/>
<dbReference type="GeneID" id="93778802"/>
<dbReference type="KEGG" id="ecw:EcE24377A_3664"/>
<dbReference type="HOGENOM" id="CLU_009422_4_0_6"/>
<dbReference type="Proteomes" id="UP000001122">
    <property type="component" value="Chromosome"/>
</dbReference>
<dbReference type="GO" id="GO:0005737">
    <property type="term" value="C:cytoplasm"/>
    <property type="evidence" value="ECO:0007669"/>
    <property type="project" value="UniProtKB-SubCell"/>
</dbReference>
<dbReference type="GO" id="GO:0008650">
    <property type="term" value="F:rRNA (uridine-2'-O-)-methyltransferase activity"/>
    <property type="evidence" value="ECO:0007669"/>
    <property type="project" value="UniProtKB-UniRule"/>
</dbReference>
<dbReference type="CDD" id="cd02440">
    <property type="entry name" value="AdoMet_MTases"/>
    <property type="match status" value="1"/>
</dbReference>
<dbReference type="FunFam" id="3.40.50.150:FF:000005">
    <property type="entry name" value="Ribosomal RNA large subunit methyltransferase E"/>
    <property type="match status" value="1"/>
</dbReference>
<dbReference type="Gene3D" id="3.40.50.150">
    <property type="entry name" value="Vaccinia Virus protein VP39"/>
    <property type="match status" value="1"/>
</dbReference>
<dbReference type="HAMAP" id="MF_01547">
    <property type="entry name" value="RNA_methyltr_E"/>
    <property type="match status" value="1"/>
</dbReference>
<dbReference type="InterPro" id="IPR050082">
    <property type="entry name" value="RNA_methyltr_RlmE"/>
</dbReference>
<dbReference type="InterPro" id="IPR002877">
    <property type="entry name" value="RNA_MeTrfase_FtsJ_dom"/>
</dbReference>
<dbReference type="InterPro" id="IPR015507">
    <property type="entry name" value="rRNA-MeTfrase_E"/>
</dbReference>
<dbReference type="InterPro" id="IPR004512">
    <property type="entry name" value="rRNA_MeTrfase_gammaproteobac"/>
</dbReference>
<dbReference type="InterPro" id="IPR029063">
    <property type="entry name" value="SAM-dependent_MTases_sf"/>
</dbReference>
<dbReference type="NCBIfam" id="NF008390">
    <property type="entry name" value="PRK11188.1"/>
    <property type="match status" value="1"/>
</dbReference>
<dbReference type="NCBIfam" id="TIGR00438">
    <property type="entry name" value="rrmJ"/>
    <property type="match status" value="1"/>
</dbReference>
<dbReference type="PANTHER" id="PTHR10920">
    <property type="entry name" value="RIBOSOMAL RNA METHYLTRANSFERASE"/>
    <property type="match status" value="1"/>
</dbReference>
<dbReference type="PANTHER" id="PTHR10920:SF18">
    <property type="entry name" value="RRNA METHYLTRANSFERASE 2, MITOCHONDRIAL"/>
    <property type="match status" value="1"/>
</dbReference>
<dbReference type="Pfam" id="PF01728">
    <property type="entry name" value="FtsJ"/>
    <property type="match status" value="1"/>
</dbReference>
<dbReference type="PIRSF" id="PIRSF005461">
    <property type="entry name" value="23S_rRNA_mtase"/>
    <property type="match status" value="1"/>
</dbReference>
<dbReference type="SUPFAM" id="SSF53335">
    <property type="entry name" value="S-adenosyl-L-methionine-dependent methyltransferases"/>
    <property type="match status" value="1"/>
</dbReference>
<name>RLME_ECO24</name>
<accession>A7ZS75</accession>
<keyword id="KW-0963">Cytoplasm</keyword>
<keyword id="KW-0489">Methyltransferase</keyword>
<keyword id="KW-1185">Reference proteome</keyword>
<keyword id="KW-0698">rRNA processing</keyword>
<keyword id="KW-0949">S-adenosyl-L-methionine</keyword>
<keyword id="KW-0808">Transferase</keyword>
<sequence length="209" mass="23335">MTGKKRSASSSRWLQEHFSDKYVQQAQKKGLRSRAWFKLDEIQQSDKLFKPGMTVVDLGAAPGGWSQYVVTQIGGKGRIIACDLLPMDPIVGVDFLQGDFRDELVMKALLERVGDSKVQVVMSDMAPNMSGTPAVDIPRAMYLVELALEMCRDVLAPGGSFVVKVFQGEGFDEYLREIRSLFTKVKVRKPDSSRARSREVYIVATGRKP</sequence>
<protein>
    <recommendedName>
        <fullName evidence="1">Ribosomal RNA large subunit methyltransferase E</fullName>
        <ecNumber evidence="1">2.1.1.166</ecNumber>
    </recommendedName>
    <alternativeName>
        <fullName evidence="1">23S rRNA Um2552 methyltransferase</fullName>
    </alternativeName>
    <alternativeName>
        <fullName evidence="1">rRNA (uridine-2'-O-)-methyltransferase</fullName>
    </alternativeName>
</protein>
<proteinExistence type="inferred from homology"/>
<gene>
    <name evidence="1" type="primary">rlmE</name>
    <name evidence="1" type="synonym">ftsJ</name>
    <name evidence="1" type="synonym">rrmJ</name>
    <name type="ordered locus">EcE24377A_3664</name>
</gene>
<feature type="chain" id="PRO_1000087682" description="Ribosomal RNA large subunit methyltransferase E">
    <location>
        <begin position="1"/>
        <end position="209"/>
    </location>
</feature>
<feature type="active site" description="Proton acceptor" evidence="1">
    <location>
        <position position="164"/>
    </location>
</feature>
<feature type="binding site" evidence="1">
    <location>
        <position position="63"/>
    </location>
    <ligand>
        <name>S-adenosyl-L-methionine</name>
        <dbReference type="ChEBI" id="CHEBI:59789"/>
    </ligand>
</feature>
<feature type="binding site" evidence="1">
    <location>
        <position position="65"/>
    </location>
    <ligand>
        <name>S-adenosyl-L-methionine</name>
        <dbReference type="ChEBI" id="CHEBI:59789"/>
    </ligand>
</feature>
<feature type="binding site" evidence="1">
    <location>
        <position position="83"/>
    </location>
    <ligand>
        <name>S-adenosyl-L-methionine</name>
        <dbReference type="ChEBI" id="CHEBI:59789"/>
    </ligand>
</feature>
<feature type="binding site" evidence="1">
    <location>
        <position position="99"/>
    </location>
    <ligand>
        <name>S-adenosyl-L-methionine</name>
        <dbReference type="ChEBI" id="CHEBI:59789"/>
    </ligand>
</feature>
<feature type="binding site" evidence="1">
    <location>
        <position position="124"/>
    </location>
    <ligand>
        <name>S-adenosyl-L-methionine</name>
        <dbReference type="ChEBI" id="CHEBI:59789"/>
    </ligand>
</feature>
<comment type="function">
    <text evidence="1">Specifically methylates the uridine in position 2552 of 23S rRNA at the 2'-O position of the ribose in the fully assembled 50S ribosomal subunit.</text>
</comment>
<comment type="catalytic activity">
    <reaction evidence="1">
        <text>uridine(2552) in 23S rRNA + S-adenosyl-L-methionine = 2'-O-methyluridine(2552) in 23S rRNA + S-adenosyl-L-homocysteine + H(+)</text>
        <dbReference type="Rhea" id="RHEA:42720"/>
        <dbReference type="Rhea" id="RHEA-COMP:10202"/>
        <dbReference type="Rhea" id="RHEA-COMP:10203"/>
        <dbReference type="ChEBI" id="CHEBI:15378"/>
        <dbReference type="ChEBI" id="CHEBI:57856"/>
        <dbReference type="ChEBI" id="CHEBI:59789"/>
        <dbReference type="ChEBI" id="CHEBI:65315"/>
        <dbReference type="ChEBI" id="CHEBI:74478"/>
        <dbReference type="EC" id="2.1.1.166"/>
    </reaction>
</comment>
<comment type="subcellular location">
    <subcellularLocation>
        <location evidence="1">Cytoplasm</location>
    </subcellularLocation>
</comment>
<comment type="similarity">
    <text evidence="1">Belongs to the class I-like SAM-binding methyltransferase superfamily. RNA methyltransferase RlmE family.</text>
</comment>